<proteinExistence type="inferred from homology"/>
<organism>
    <name type="scientific">Methanococcus maripaludis (strain C5 / ATCC BAA-1333)</name>
    <dbReference type="NCBI Taxonomy" id="402880"/>
    <lineage>
        <taxon>Archaea</taxon>
        <taxon>Methanobacteriati</taxon>
        <taxon>Methanobacteriota</taxon>
        <taxon>Methanomada group</taxon>
        <taxon>Methanococci</taxon>
        <taxon>Methanococcales</taxon>
        <taxon>Methanococcaceae</taxon>
        <taxon>Methanococcus</taxon>
    </lineage>
</organism>
<comment type="similarity">
    <text evidence="1">Belongs to the eukaryotic ribosomal protein eL34 family.</text>
</comment>
<reference key="1">
    <citation type="submission" date="2007-03" db="EMBL/GenBank/DDBJ databases">
        <title>Complete sequence of chromosome of Methanococcus maripaludis C5.</title>
        <authorList>
            <consortium name="US DOE Joint Genome Institute"/>
            <person name="Copeland A."/>
            <person name="Lucas S."/>
            <person name="Lapidus A."/>
            <person name="Barry K."/>
            <person name="Glavina del Rio T."/>
            <person name="Dalin E."/>
            <person name="Tice H."/>
            <person name="Pitluck S."/>
            <person name="Chertkov O."/>
            <person name="Brettin T."/>
            <person name="Bruce D."/>
            <person name="Han C."/>
            <person name="Detter J.C."/>
            <person name="Schmutz J."/>
            <person name="Larimer F."/>
            <person name="Land M."/>
            <person name="Hauser L."/>
            <person name="Kyrpides N."/>
            <person name="Mikhailova N."/>
            <person name="Sieprawska-Lupa M."/>
            <person name="Whitman W.B."/>
            <person name="Richardson P."/>
        </authorList>
    </citation>
    <scope>NUCLEOTIDE SEQUENCE [LARGE SCALE GENOMIC DNA]</scope>
    <source>
        <strain>C5 / ATCC BAA-1333</strain>
    </source>
</reference>
<evidence type="ECO:0000255" key="1">
    <source>
        <dbReference type="HAMAP-Rule" id="MF_00349"/>
    </source>
</evidence>
<evidence type="ECO:0000256" key="2">
    <source>
        <dbReference type="SAM" id="MobiDB-lite"/>
    </source>
</evidence>
<evidence type="ECO:0000305" key="3"/>
<name>RL34_METM5</name>
<sequence length="89" mass="9765">MPAPRYKSGSSKKVYRKAPGNSSIVHYRRKKQSKAVCGACGALLNGVPRGRAVEITKLAKTEKRPERAFGGNLCPKCVKKMMVAKARNF</sequence>
<gene>
    <name evidence="1" type="primary">rpl34e</name>
    <name type="ordered locus">MmarC5_0978</name>
</gene>
<accession>A4FYK0</accession>
<protein>
    <recommendedName>
        <fullName evidence="1">Large ribosomal subunit protein eL34</fullName>
    </recommendedName>
    <alternativeName>
        <fullName evidence="3">50S ribosomal protein L34e</fullName>
    </alternativeName>
</protein>
<feature type="chain" id="PRO_1000133408" description="Large ribosomal subunit protein eL34">
    <location>
        <begin position="1"/>
        <end position="89"/>
    </location>
</feature>
<feature type="region of interest" description="Disordered" evidence="2">
    <location>
        <begin position="1"/>
        <end position="22"/>
    </location>
</feature>
<keyword id="KW-0687">Ribonucleoprotein</keyword>
<keyword id="KW-0689">Ribosomal protein</keyword>
<dbReference type="EMBL" id="CP000609">
    <property type="protein sequence ID" value="ABO35284.1"/>
    <property type="molecule type" value="Genomic_DNA"/>
</dbReference>
<dbReference type="RefSeq" id="WP_011868737.1">
    <property type="nucleotide sequence ID" value="NC_009135.1"/>
</dbReference>
<dbReference type="SMR" id="A4FYK0"/>
<dbReference type="STRING" id="402880.MmarC5_0978"/>
<dbReference type="GeneID" id="4928830"/>
<dbReference type="KEGG" id="mmq:MmarC5_0978"/>
<dbReference type="eggNOG" id="arCOG04168">
    <property type="taxonomic scope" value="Archaea"/>
</dbReference>
<dbReference type="HOGENOM" id="CLU_118652_2_0_2"/>
<dbReference type="OrthoDB" id="43096at2157"/>
<dbReference type="Proteomes" id="UP000000253">
    <property type="component" value="Chromosome"/>
</dbReference>
<dbReference type="GO" id="GO:1990904">
    <property type="term" value="C:ribonucleoprotein complex"/>
    <property type="evidence" value="ECO:0007669"/>
    <property type="project" value="UniProtKB-KW"/>
</dbReference>
<dbReference type="GO" id="GO:0005840">
    <property type="term" value="C:ribosome"/>
    <property type="evidence" value="ECO:0007669"/>
    <property type="project" value="UniProtKB-KW"/>
</dbReference>
<dbReference type="GO" id="GO:0003735">
    <property type="term" value="F:structural constituent of ribosome"/>
    <property type="evidence" value="ECO:0007669"/>
    <property type="project" value="InterPro"/>
</dbReference>
<dbReference type="GO" id="GO:0006412">
    <property type="term" value="P:translation"/>
    <property type="evidence" value="ECO:0007669"/>
    <property type="project" value="UniProtKB-UniRule"/>
</dbReference>
<dbReference type="Gene3D" id="6.20.340.10">
    <property type="match status" value="1"/>
</dbReference>
<dbReference type="HAMAP" id="MF_00349">
    <property type="entry name" value="Ribosomal_eL34"/>
    <property type="match status" value="1"/>
</dbReference>
<dbReference type="InterPro" id="IPR008195">
    <property type="entry name" value="Ribosomal_eL34"/>
</dbReference>
<dbReference type="InterPro" id="IPR038562">
    <property type="entry name" value="Ribosomal_eL34_C_sf"/>
</dbReference>
<dbReference type="InterPro" id="IPR047868">
    <property type="entry name" value="Ribosomal_L34e_arc-type"/>
</dbReference>
<dbReference type="NCBIfam" id="NF003143">
    <property type="entry name" value="PRK04059.1"/>
    <property type="match status" value="1"/>
</dbReference>
<dbReference type="PANTHER" id="PTHR10759">
    <property type="entry name" value="60S RIBOSOMAL PROTEIN L34"/>
    <property type="match status" value="1"/>
</dbReference>
<dbReference type="Pfam" id="PF01199">
    <property type="entry name" value="Ribosomal_L34e"/>
    <property type="match status" value="1"/>
</dbReference>
<dbReference type="PRINTS" id="PR01250">
    <property type="entry name" value="RIBOSOMALL34"/>
</dbReference>